<feature type="chain" id="PRO_0000312376" description="Large ribosomal subunit protein uL2m">
    <location>
        <begin position="1"/>
        <end position="266"/>
    </location>
</feature>
<accession>Q23888</accession>
<accession>Q9XPJ2</accession>
<comment type="subcellular location">
    <subcellularLocation>
        <location>Mitochondrion</location>
    </subcellularLocation>
</comment>
<comment type="similarity">
    <text evidence="1">Belongs to the universal ribosomal protein uL2 family.</text>
</comment>
<dbReference type="EMBL" id="D21196">
    <property type="protein sequence ID" value="BAA04737.1"/>
    <property type="molecule type" value="Genomic_DNA"/>
</dbReference>
<dbReference type="EMBL" id="AB000109">
    <property type="protein sequence ID" value="BAA78073.1"/>
    <property type="molecule type" value="Genomic_DNA"/>
</dbReference>
<dbReference type="PIR" id="T43770">
    <property type="entry name" value="T43770"/>
</dbReference>
<dbReference type="RefSeq" id="NP_050091.1">
    <property type="nucleotide sequence ID" value="NC_000895.1"/>
</dbReference>
<dbReference type="SMR" id="Q23888"/>
<dbReference type="FunCoup" id="Q23888">
    <property type="interactions" value="87"/>
</dbReference>
<dbReference type="STRING" id="44689.Q23888"/>
<dbReference type="GeneID" id="2193919"/>
<dbReference type="KEGG" id="ddi:DidioMp24"/>
<dbReference type="dictyBase" id="DDB_G0294036">
    <property type="gene designation" value="mrpl2"/>
</dbReference>
<dbReference type="VEuPathDB" id="AmoebaDB:DidioMp24"/>
<dbReference type="InParanoid" id="Q23888"/>
<dbReference type="PhylomeDB" id="Q23888"/>
<dbReference type="PRO" id="PR:Q23888"/>
<dbReference type="Proteomes" id="UP000002195">
    <property type="component" value="Mitochondrion"/>
</dbReference>
<dbReference type="GO" id="GO:0005762">
    <property type="term" value="C:mitochondrial large ribosomal subunit"/>
    <property type="evidence" value="ECO:0000318"/>
    <property type="project" value="GO_Central"/>
</dbReference>
<dbReference type="GO" id="GO:0003723">
    <property type="term" value="F:RNA binding"/>
    <property type="evidence" value="ECO:0000318"/>
    <property type="project" value="GO_Central"/>
</dbReference>
<dbReference type="GO" id="GO:0003735">
    <property type="term" value="F:structural constituent of ribosome"/>
    <property type="evidence" value="ECO:0000318"/>
    <property type="project" value="GO_Central"/>
</dbReference>
<dbReference type="GO" id="GO:0016740">
    <property type="term" value="F:transferase activity"/>
    <property type="evidence" value="ECO:0007669"/>
    <property type="project" value="InterPro"/>
</dbReference>
<dbReference type="GO" id="GO:0032543">
    <property type="term" value="P:mitochondrial translation"/>
    <property type="evidence" value="ECO:0000318"/>
    <property type="project" value="GO_Central"/>
</dbReference>
<dbReference type="Gene3D" id="2.30.30.30">
    <property type="match status" value="1"/>
</dbReference>
<dbReference type="Gene3D" id="2.40.50.140">
    <property type="entry name" value="Nucleic acid-binding proteins"/>
    <property type="match status" value="1"/>
</dbReference>
<dbReference type="Gene3D" id="4.10.950.10">
    <property type="entry name" value="Ribosomal protein L2, domain 3"/>
    <property type="match status" value="1"/>
</dbReference>
<dbReference type="InterPro" id="IPR012340">
    <property type="entry name" value="NA-bd_OB-fold"/>
</dbReference>
<dbReference type="InterPro" id="IPR014722">
    <property type="entry name" value="Rib_uL2_dom2"/>
</dbReference>
<dbReference type="InterPro" id="IPR002171">
    <property type="entry name" value="Ribosomal_uL2"/>
</dbReference>
<dbReference type="InterPro" id="IPR005880">
    <property type="entry name" value="Ribosomal_uL2_bac/org-type"/>
</dbReference>
<dbReference type="InterPro" id="IPR022669">
    <property type="entry name" value="Ribosomal_uL2_C"/>
</dbReference>
<dbReference type="InterPro" id="IPR014726">
    <property type="entry name" value="Ribosomal_uL2_dom3"/>
</dbReference>
<dbReference type="InterPro" id="IPR022666">
    <property type="entry name" value="Ribosomal_uL2_RNA-bd_dom"/>
</dbReference>
<dbReference type="InterPro" id="IPR008991">
    <property type="entry name" value="Translation_prot_SH3-like_sf"/>
</dbReference>
<dbReference type="NCBIfam" id="TIGR01171">
    <property type="entry name" value="rplB_bact"/>
    <property type="match status" value="1"/>
</dbReference>
<dbReference type="PANTHER" id="PTHR13691:SF5">
    <property type="entry name" value="LARGE RIBOSOMAL SUBUNIT PROTEIN UL2M"/>
    <property type="match status" value="1"/>
</dbReference>
<dbReference type="PANTHER" id="PTHR13691">
    <property type="entry name" value="RIBOSOMAL PROTEIN L2"/>
    <property type="match status" value="1"/>
</dbReference>
<dbReference type="Pfam" id="PF00181">
    <property type="entry name" value="Ribosomal_L2"/>
    <property type="match status" value="1"/>
</dbReference>
<dbReference type="Pfam" id="PF03947">
    <property type="entry name" value="Ribosomal_L2_C"/>
    <property type="match status" value="1"/>
</dbReference>
<dbReference type="PIRSF" id="PIRSF002158">
    <property type="entry name" value="Ribosomal_L2"/>
    <property type="match status" value="1"/>
</dbReference>
<dbReference type="SMART" id="SM01383">
    <property type="entry name" value="Ribosomal_L2"/>
    <property type="match status" value="1"/>
</dbReference>
<dbReference type="SMART" id="SM01382">
    <property type="entry name" value="Ribosomal_L2_C"/>
    <property type="match status" value="1"/>
</dbReference>
<dbReference type="SUPFAM" id="SSF50249">
    <property type="entry name" value="Nucleic acid-binding proteins"/>
    <property type="match status" value="1"/>
</dbReference>
<dbReference type="SUPFAM" id="SSF50104">
    <property type="entry name" value="Translation proteins SH3-like domain"/>
    <property type="match status" value="1"/>
</dbReference>
<keyword id="KW-0496">Mitochondrion</keyword>
<keyword id="KW-1185">Reference proteome</keyword>
<keyword id="KW-0687">Ribonucleoprotein</keyword>
<keyword id="KW-0689">Ribosomal protein</keyword>
<reference key="1">
    <citation type="journal article" date="1998" name="Curr. Genet.">
        <title>A ribosomal protein gene cluster is encoded in the mitochondrial DNA of Dictyostelium discoideum: UGA termination codons and similarity of gene order to Acanthamoeba castellanii.</title>
        <authorList>
            <person name="Iwamoto M."/>
            <person name="Pi M."/>
            <person name="Kurihara M."/>
            <person name="Morio T."/>
            <person name="Tanaka Y."/>
        </authorList>
    </citation>
    <scope>NUCLEOTIDE SEQUENCE [GENOMIC DNA]</scope>
    <source>
        <strain>AX3</strain>
    </source>
</reference>
<reference key="2">
    <citation type="journal article" date="2000" name="Mol. Gen. Genet.">
        <title>The mitochondrial DNA of Dictyostelium discoideum: complete sequence, gene content and genome organization.</title>
        <authorList>
            <person name="Ogawa S."/>
            <person name="Yoshino R."/>
            <person name="Angata K."/>
            <person name="Iwamoto M."/>
            <person name="Pi M."/>
            <person name="Kuroe K."/>
            <person name="Matsuo K."/>
            <person name="Morio T."/>
            <person name="Urushihara H."/>
            <person name="Yanagisawa K."/>
            <person name="Tanaka Y."/>
        </authorList>
    </citation>
    <scope>NUCLEOTIDE SEQUENCE [LARGE SCALE GENOMIC DNA]</scope>
    <source>
        <strain>AX3</strain>
    </source>
</reference>
<organism>
    <name type="scientific">Dictyostelium discoideum</name>
    <name type="common">Social amoeba</name>
    <dbReference type="NCBI Taxonomy" id="44689"/>
    <lineage>
        <taxon>Eukaryota</taxon>
        <taxon>Amoebozoa</taxon>
        <taxon>Evosea</taxon>
        <taxon>Eumycetozoa</taxon>
        <taxon>Dictyostelia</taxon>
        <taxon>Dictyosteliales</taxon>
        <taxon>Dictyosteliaceae</taxon>
        <taxon>Dictyostelium</taxon>
    </lineage>
</organism>
<protein>
    <recommendedName>
        <fullName evidence="1">Large ribosomal subunit protein uL2m</fullName>
    </recommendedName>
    <alternativeName>
        <fullName>60S ribosomal protein L2, mitochondrial</fullName>
    </alternativeName>
</protein>
<geneLocation type="mitochondrion"/>
<proteinExistence type="inferred from homology"/>
<name>RM02_DICDI</name>
<sequence length="266" mass="30299">MVLNWRGVKSRLYSGKRRIDGRNKGLIAIRSRGGALKRKYRYIEHYKQKWMDKWLFVMRIEYDPNRSAHIALCSILKEGIYFYVISIAKLEVGSLIITSALKLGTLQVGNTTKIKNIPEGLLINNIELIENSGSKISRAAGTSSLIIKKYNKKYSLVKLSSKECRLISNECYATIGTVSNIERKLKQNKKASYSRKRGIRPIVRGLAMNPVDHPHGGRTKGGVHWKSFSGKLAYNVSSRKKTKMTSRYIIIGHRKQKIMDKQIKNG</sequence>
<gene>
    <name type="primary">mrpl2</name>
    <name type="synonym">rpl2</name>
    <name type="ORF">DDB_G0294036</name>
</gene>
<evidence type="ECO:0000305" key="1"/>